<dbReference type="EC" id="1.8.4.11" evidence="1"/>
<dbReference type="EMBL" id="CP000025">
    <property type="protein sequence ID" value="AAW34533.1"/>
    <property type="molecule type" value="Genomic_DNA"/>
</dbReference>
<dbReference type="RefSeq" id="WP_002852283.1">
    <property type="nucleotide sequence ID" value="NC_003912.7"/>
</dbReference>
<dbReference type="SMR" id="Q5HVD4"/>
<dbReference type="KEGG" id="cjr:CJE0740"/>
<dbReference type="HOGENOM" id="CLU_031040_10_0_7"/>
<dbReference type="GO" id="GO:0033744">
    <property type="term" value="F:L-methionine:thioredoxin-disulfide S-oxidoreductase activity"/>
    <property type="evidence" value="ECO:0007669"/>
    <property type="project" value="RHEA"/>
</dbReference>
<dbReference type="GO" id="GO:0008113">
    <property type="term" value="F:peptide-methionine (S)-S-oxide reductase activity"/>
    <property type="evidence" value="ECO:0007669"/>
    <property type="project" value="UniProtKB-UniRule"/>
</dbReference>
<dbReference type="GO" id="GO:0036211">
    <property type="term" value="P:protein modification process"/>
    <property type="evidence" value="ECO:0007669"/>
    <property type="project" value="UniProtKB-UniRule"/>
</dbReference>
<dbReference type="Gene3D" id="3.30.1060.10">
    <property type="entry name" value="Peptide methionine sulphoxide reductase MsrA"/>
    <property type="match status" value="1"/>
</dbReference>
<dbReference type="HAMAP" id="MF_01401">
    <property type="entry name" value="MsrA"/>
    <property type="match status" value="1"/>
</dbReference>
<dbReference type="InterPro" id="IPR002569">
    <property type="entry name" value="Met_Sox_Rdtase_MsrA_dom"/>
</dbReference>
<dbReference type="InterPro" id="IPR036509">
    <property type="entry name" value="Met_Sox_Rdtase_MsrA_sf"/>
</dbReference>
<dbReference type="NCBIfam" id="TIGR00401">
    <property type="entry name" value="msrA"/>
    <property type="match status" value="1"/>
</dbReference>
<dbReference type="PANTHER" id="PTHR43774">
    <property type="entry name" value="PEPTIDE METHIONINE SULFOXIDE REDUCTASE"/>
    <property type="match status" value="1"/>
</dbReference>
<dbReference type="PANTHER" id="PTHR43774:SF1">
    <property type="entry name" value="PEPTIDE METHIONINE SULFOXIDE REDUCTASE MSRA 2"/>
    <property type="match status" value="1"/>
</dbReference>
<dbReference type="Pfam" id="PF01625">
    <property type="entry name" value="PMSR"/>
    <property type="match status" value="1"/>
</dbReference>
<dbReference type="SUPFAM" id="SSF55068">
    <property type="entry name" value="Peptide methionine sulfoxide reductase"/>
    <property type="match status" value="1"/>
</dbReference>
<organism>
    <name type="scientific">Campylobacter jejuni (strain RM1221)</name>
    <dbReference type="NCBI Taxonomy" id="195099"/>
    <lineage>
        <taxon>Bacteria</taxon>
        <taxon>Pseudomonadati</taxon>
        <taxon>Campylobacterota</taxon>
        <taxon>Epsilonproteobacteria</taxon>
        <taxon>Campylobacterales</taxon>
        <taxon>Campylobacteraceae</taxon>
        <taxon>Campylobacter</taxon>
    </lineage>
</organism>
<keyword id="KW-0560">Oxidoreductase</keyword>
<proteinExistence type="inferred from homology"/>
<reference key="1">
    <citation type="journal article" date="2005" name="PLoS Biol.">
        <title>Major structural differences and novel potential virulence mechanisms from the genomes of multiple Campylobacter species.</title>
        <authorList>
            <person name="Fouts D.E."/>
            <person name="Mongodin E.F."/>
            <person name="Mandrell R.E."/>
            <person name="Miller W.G."/>
            <person name="Rasko D.A."/>
            <person name="Ravel J."/>
            <person name="Brinkac L.M."/>
            <person name="DeBoy R.T."/>
            <person name="Parker C.T."/>
            <person name="Daugherty S.C."/>
            <person name="Dodson R.J."/>
            <person name="Durkin A.S."/>
            <person name="Madupu R."/>
            <person name="Sullivan S.A."/>
            <person name="Shetty J.U."/>
            <person name="Ayodeji M.A."/>
            <person name="Shvartsbeyn A."/>
            <person name="Schatz M.C."/>
            <person name="Badger J.H."/>
            <person name="Fraser C.M."/>
            <person name="Nelson K.E."/>
        </authorList>
    </citation>
    <scope>NUCLEOTIDE SEQUENCE [LARGE SCALE GENOMIC DNA]</scope>
    <source>
        <strain>RM1221</strain>
    </source>
</reference>
<protein>
    <recommendedName>
        <fullName evidence="1">Peptide methionine sulfoxide reductase MsrA</fullName>
        <shortName evidence="1">Protein-methionine-S-oxide reductase</shortName>
        <ecNumber evidence="1">1.8.4.11</ecNumber>
    </recommendedName>
    <alternativeName>
        <fullName evidence="1">Peptide-methionine (S)-S-oxide reductase</fullName>
        <shortName evidence="1">Peptide Met(O) reductase</shortName>
    </alternativeName>
</protein>
<comment type="function">
    <text evidence="1">Has an important function as a repair enzyme for proteins that have been inactivated by oxidation. Catalyzes the reversible oxidation-reduction of methionine sulfoxide in proteins to methionine.</text>
</comment>
<comment type="catalytic activity">
    <reaction evidence="1">
        <text>L-methionyl-[protein] + [thioredoxin]-disulfide + H2O = L-methionyl-(S)-S-oxide-[protein] + [thioredoxin]-dithiol</text>
        <dbReference type="Rhea" id="RHEA:14217"/>
        <dbReference type="Rhea" id="RHEA-COMP:10698"/>
        <dbReference type="Rhea" id="RHEA-COMP:10700"/>
        <dbReference type="Rhea" id="RHEA-COMP:12313"/>
        <dbReference type="Rhea" id="RHEA-COMP:12315"/>
        <dbReference type="ChEBI" id="CHEBI:15377"/>
        <dbReference type="ChEBI" id="CHEBI:16044"/>
        <dbReference type="ChEBI" id="CHEBI:29950"/>
        <dbReference type="ChEBI" id="CHEBI:44120"/>
        <dbReference type="ChEBI" id="CHEBI:50058"/>
        <dbReference type="EC" id="1.8.4.11"/>
    </reaction>
</comment>
<comment type="catalytic activity">
    <reaction evidence="1">
        <text>[thioredoxin]-disulfide + L-methionine + H2O = L-methionine (S)-S-oxide + [thioredoxin]-dithiol</text>
        <dbReference type="Rhea" id="RHEA:19993"/>
        <dbReference type="Rhea" id="RHEA-COMP:10698"/>
        <dbReference type="Rhea" id="RHEA-COMP:10700"/>
        <dbReference type="ChEBI" id="CHEBI:15377"/>
        <dbReference type="ChEBI" id="CHEBI:29950"/>
        <dbReference type="ChEBI" id="CHEBI:50058"/>
        <dbReference type="ChEBI" id="CHEBI:57844"/>
        <dbReference type="ChEBI" id="CHEBI:58772"/>
        <dbReference type="EC" id="1.8.4.11"/>
    </reaction>
</comment>
<comment type="similarity">
    <text evidence="1">Belongs to the MsrA Met sulfoxide reductase family.</text>
</comment>
<feature type="chain" id="PRO_0000138535" description="Peptide methionine sulfoxide reductase MsrA">
    <location>
        <begin position="1"/>
        <end position="165"/>
    </location>
</feature>
<feature type="active site" evidence="1">
    <location>
        <position position="10"/>
    </location>
</feature>
<sequence length="165" mass="19009">MKNIILGGGCFWCIEAVFERLKGVINTEVGYSGGKPNPSYESVCNGDGNIEVVKINYDEKQISLLEILILFFKIHDPTSIDKQGEDIGIQYRSIIFYENEEDKILAQNFIEEQQKIFSKKIVTKISRLQTYYKAENYHQHYFINNPDQGYCQAVIAPKLQKIQSD</sequence>
<accession>Q5HVD4</accession>
<gene>
    <name evidence="1" type="primary">msrA</name>
    <name type="ordered locus">CJE0740</name>
</gene>
<evidence type="ECO:0000255" key="1">
    <source>
        <dbReference type="HAMAP-Rule" id="MF_01401"/>
    </source>
</evidence>
<name>MSRA_CAMJR</name>